<accession>Q1MPT0</accession>
<evidence type="ECO:0000255" key="1">
    <source>
        <dbReference type="HAMAP-Rule" id="MF_00480"/>
    </source>
</evidence>
<evidence type="ECO:0000305" key="2"/>
<comment type="function">
    <text evidence="1">One of the primary rRNA binding proteins, it binds directly to 16S rRNA where it nucleates assembly of the head domain of the 30S subunit. Is located at the subunit interface close to the decoding center, probably blocks exit of the E-site tRNA.</text>
</comment>
<comment type="subunit">
    <text evidence="1">Part of the 30S ribosomal subunit. Contacts proteins S9 and S11.</text>
</comment>
<comment type="similarity">
    <text evidence="1">Belongs to the universal ribosomal protein uS7 family.</text>
</comment>
<feature type="chain" id="PRO_1000014216" description="Small ribosomal subunit protein uS7">
    <location>
        <begin position="1"/>
        <end position="156"/>
    </location>
</feature>
<name>RS7_LAWIP</name>
<sequence>MPRKGPVPRREVLPDPIYNSRLASRFVNRLMYDGKKGVAEKIFYGALENLSEKTGEEPLRAFERALDNVKPQFEVKARRVGGATYQVPMEVRSDRQISLSIRWLITYARSRGEKGMVNKLAAEFLDAFNNRGGAVKKKEDTHRMAEANKAFAHYRW</sequence>
<dbReference type="EMBL" id="AM180252">
    <property type="protein sequence ID" value="CAJ54997.1"/>
    <property type="molecule type" value="Genomic_DNA"/>
</dbReference>
<dbReference type="RefSeq" id="WP_011527026.1">
    <property type="nucleotide sequence ID" value="NC_008011.1"/>
</dbReference>
<dbReference type="SMR" id="Q1MPT0"/>
<dbReference type="STRING" id="363253.LI0943"/>
<dbReference type="KEGG" id="lip:LI0943"/>
<dbReference type="eggNOG" id="COG0049">
    <property type="taxonomic scope" value="Bacteria"/>
</dbReference>
<dbReference type="HOGENOM" id="CLU_072226_1_1_7"/>
<dbReference type="OrthoDB" id="9807653at2"/>
<dbReference type="Proteomes" id="UP000002430">
    <property type="component" value="Chromosome"/>
</dbReference>
<dbReference type="GO" id="GO:0015935">
    <property type="term" value="C:small ribosomal subunit"/>
    <property type="evidence" value="ECO:0007669"/>
    <property type="project" value="InterPro"/>
</dbReference>
<dbReference type="GO" id="GO:0019843">
    <property type="term" value="F:rRNA binding"/>
    <property type="evidence" value="ECO:0007669"/>
    <property type="project" value="UniProtKB-UniRule"/>
</dbReference>
<dbReference type="GO" id="GO:0003735">
    <property type="term" value="F:structural constituent of ribosome"/>
    <property type="evidence" value="ECO:0007669"/>
    <property type="project" value="InterPro"/>
</dbReference>
<dbReference type="GO" id="GO:0000049">
    <property type="term" value="F:tRNA binding"/>
    <property type="evidence" value="ECO:0007669"/>
    <property type="project" value="UniProtKB-UniRule"/>
</dbReference>
<dbReference type="GO" id="GO:0006412">
    <property type="term" value="P:translation"/>
    <property type="evidence" value="ECO:0007669"/>
    <property type="project" value="UniProtKB-UniRule"/>
</dbReference>
<dbReference type="CDD" id="cd14869">
    <property type="entry name" value="uS7_Bacteria"/>
    <property type="match status" value="1"/>
</dbReference>
<dbReference type="FunFam" id="1.10.455.10:FF:000001">
    <property type="entry name" value="30S ribosomal protein S7"/>
    <property type="match status" value="1"/>
</dbReference>
<dbReference type="Gene3D" id="1.10.455.10">
    <property type="entry name" value="Ribosomal protein S7 domain"/>
    <property type="match status" value="1"/>
</dbReference>
<dbReference type="HAMAP" id="MF_00480_B">
    <property type="entry name" value="Ribosomal_uS7_B"/>
    <property type="match status" value="1"/>
</dbReference>
<dbReference type="InterPro" id="IPR000235">
    <property type="entry name" value="Ribosomal_uS7"/>
</dbReference>
<dbReference type="InterPro" id="IPR005717">
    <property type="entry name" value="Ribosomal_uS7_bac/org-type"/>
</dbReference>
<dbReference type="InterPro" id="IPR020606">
    <property type="entry name" value="Ribosomal_uS7_CS"/>
</dbReference>
<dbReference type="InterPro" id="IPR023798">
    <property type="entry name" value="Ribosomal_uS7_dom"/>
</dbReference>
<dbReference type="InterPro" id="IPR036823">
    <property type="entry name" value="Ribosomal_uS7_dom_sf"/>
</dbReference>
<dbReference type="NCBIfam" id="TIGR01029">
    <property type="entry name" value="rpsG_bact"/>
    <property type="match status" value="1"/>
</dbReference>
<dbReference type="PANTHER" id="PTHR11205">
    <property type="entry name" value="RIBOSOMAL PROTEIN S7"/>
    <property type="match status" value="1"/>
</dbReference>
<dbReference type="Pfam" id="PF00177">
    <property type="entry name" value="Ribosomal_S7"/>
    <property type="match status" value="1"/>
</dbReference>
<dbReference type="PIRSF" id="PIRSF002122">
    <property type="entry name" value="RPS7p_RPS7a_RPS5e_RPS7o"/>
    <property type="match status" value="1"/>
</dbReference>
<dbReference type="SUPFAM" id="SSF47973">
    <property type="entry name" value="Ribosomal protein S7"/>
    <property type="match status" value="1"/>
</dbReference>
<dbReference type="PROSITE" id="PS00052">
    <property type="entry name" value="RIBOSOMAL_S7"/>
    <property type="match status" value="1"/>
</dbReference>
<reference key="1">
    <citation type="submission" date="2005-11" db="EMBL/GenBank/DDBJ databases">
        <title>The complete genome sequence of Lawsonia intracellularis: the causative agent of proliferative enteropathy.</title>
        <authorList>
            <person name="Kaur K."/>
            <person name="Zhang Q."/>
            <person name="Beckler D."/>
            <person name="Munir S."/>
            <person name="Li L."/>
            <person name="Kinsley K."/>
            <person name="Herron L."/>
            <person name="Peterson A."/>
            <person name="May B."/>
            <person name="Singh S."/>
            <person name="Gebhart C."/>
            <person name="Kapur V."/>
        </authorList>
    </citation>
    <scope>NUCLEOTIDE SEQUENCE [LARGE SCALE GENOMIC DNA]</scope>
    <source>
        <strain>PHE/MN1-00</strain>
    </source>
</reference>
<organism>
    <name type="scientific">Lawsonia intracellularis (strain PHE/MN1-00)</name>
    <dbReference type="NCBI Taxonomy" id="363253"/>
    <lineage>
        <taxon>Bacteria</taxon>
        <taxon>Pseudomonadati</taxon>
        <taxon>Thermodesulfobacteriota</taxon>
        <taxon>Desulfovibrionia</taxon>
        <taxon>Desulfovibrionales</taxon>
        <taxon>Desulfovibrionaceae</taxon>
        <taxon>Lawsonia</taxon>
    </lineage>
</organism>
<proteinExistence type="inferred from homology"/>
<protein>
    <recommendedName>
        <fullName evidence="1">Small ribosomal subunit protein uS7</fullName>
    </recommendedName>
    <alternativeName>
        <fullName evidence="2">30S ribosomal protein S7</fullName>
    </alternativeName>
</protein>
<gene>
    <name evidence="1" type="primary">rpsG</name>
    <name type="ordered locus">LI0943</name>
</gene>
<keyword id="KW-1185">Reference proteome</keyword>
<keyword id="KW-0687">Ribonucleoprotein</keyword>
<keyword id="KW-0689">Ribosomal protein</keyword>
<keyword id="KW-0694">RNA-binding</keyword>
<keyword id="KW-0699">rRNA-binding</keyword>
<keyword id="KW-0820">tRNA-binding</keyword>